<accession>P37444</accession>
<feature type="chain" id="PRO_0000196503" description="Trp operon repressor">
    <location>
        <begin position="1"/>
        <end position="108"/>
    </location>
</feature>
<feature type="DNA-binding region" evidence="1">
    <location>
        <begin position="68"/>
        <end position="91"/>
    </location>
</feature>
<keyword id="KW-0963">Cytoplasm</keyword>
<keyword id="KW-0238">DNA-binding</keyword>
<keyword id="KW-1185">Reference proteome</keyword>
<keyword id="KW-0678">Repressor</keyword>
<keyword id="KW-0804">Transcription</keyword>
<keyword id="KW-0805">Transcription regulation</keyword>
<proteinExistence type="inferred from homology"/>
<protein>
    <recommendedName>
        <fullName>Trp operon repressor</fullName>
    </recommendedName>
</protein>
<comment type="function">
    <text evidence="1">This protein is an aporepressor. When complexed with L-tryptophan it binds the operator region of the trp operon (5'-ACTAGT-'3') and prevents the initiation of transcription. The complex also regulates trp repressor biosynthesis by binding to its regulatory region (By similarity).</text>
</comment>
<comment type="subunit">
    <text evidence="1">Homodimer.</text>
</comment>
<comment type="subcellular location">
    <subcellularLocation>
        <location evidence="1">Cytoplasm</location>
    </subcellularLocation>
</comment>
<comment type="similarity">
    <text evidence="2">Belongs to the TrpR family.</text>
</comment>
<reference key="1">
    <citation type="journal article" date="2001" name="Nature">
        <title>Complete genome sequence of Salmonella enterica serovar Typhimurium LT2.</title>
        <authorList>
            <person name="McClelland M."/>
            <person name="Sanderson K.E."/>
            <person name="Spieth J."/>
            <person name="Clifton S.W."/>
            <person name="Latreille P."/>
            <person name="Courtney L."/>
            <person name="Porwollik S."/>
            <person name="Ali J."/>
            <person name="Dante M."/>
            <person name="Du F."/>
            <person name="Hou S."/>
            <person name="Layman D."/>
            <person name="Leonard S."/>
            <person name="Nguyen C."/>
            <person name="Scott K."/>
            <person name="Holmes A."/>
            <person name="Grewal N."/>
            <person name="Mulvaney E."/>
            <person name="Ryan E."/>
            <person name="Sun H."/>
            <person name="Florea L."/>
            <person name="Miller W."/>
            <person name="Stoneking T."/>
            <person name="Nhan M."/>
            <person name="Waterston R."/>
            <person name="Wilson R.K."/>
        </authorList>
    </citation>
    <scope>NUCLEOTIDE SEQUENCE [LARGE SCALE GENOMIC DNA]</scope>
    <source>
        <strain>LT2 / SGSC1412 / ATCC 700720</strain>
    </source>
</reference>
<gene>
    <name type="primary">trpR</name>
    <name type="ordered locus">STM4583</name>
</gene>
<organism>
    <name type="scientific">Salmonella typhimurium (strain LT2 / SGSC1412 / ATCC 700720)</name>
    <dbReference type="NCBI Taxonomy" id="99287"/>
    <lineage>
        <taxon>Bacteria</taxon>
        <taxon>Pseudomonadati</taxon>
        <taxon>Pseudomonadota</taxon>
        <taxon>Gammaproteobacteria</taxon>
        <taxon>Enterobacterales</taxon>
        <taxon>Enterobacteriaceae</taxon>
        <taxon>Salmonella</taxon>
    </lineage>
</organism>
<evidence type="ECO:0000250" key="1"/>
<evidence type="ECO:0000305" key="2"/>
<sequence>MTQHSPYSSAIAEQRNQEWLRFVELLRQAYAEDLHLPLLQLMLTPDEREALGTRVRIIEELLRGEMSQRELKTELGAGIATITRGSNSLKSAPVELRHWLENVLLKNA</sequence>
<name>TRPR_SALTY</name>
<dbReference type="EMBL" id="AE006468">
    <property type="protein sequence ID" value="AAL23398.1"/>
    <property type="molecule type" value="Genomic_DNA"/>
</dbReference>
<dbReference type="RefSeq" id="NP_463439.1">
    <property type="nucleotide sequence ID" value="NC_003197.2"/>
</dbReference>
<dbReference type="RefSeq" id="WP_000192003.1">
    <property type="nucleotide sequence ID" value="NC_003197.2"/>
</dbReference>
<dbReference type="SMR" id="P37444"/>
<dbReference type="STRING" id="99287.STM4583"/>
<dbReference type="PaxDb" id="99287-STM4583"/>
<dbReference type="GeneID" id="1256109"/>
<dbReference type="KEGG" id="stm:STM4583"/>
<dbReference type="PATRIC" id="fig|99287.12.peg.4826"/>
<dbReference type="HOGENOM" id="CLU_147939_0_0_6"/>
<dbReference type="OMA" id="MSHEPEY"/>
<dbReference type="PhylomeDB" id="P37444"/>
<dbReference type="BioCyc" id="SENT99287:STM4583-MONOMER"/>
<dbReference type="Proteomes" id="UP000001014">
    <property type="component" value="Chromosome"/>
</dbReference>
<dbReference type="GO" id="GO:0005737">
    <property type="term" value="C:cytoplasm"/>
    <property type="evidence" value="ECO:0007669"/>
    <property type="project" value="UniProtKB-SubCell"/>
</dbReference>
<dbReference type="GO" id="GO:0003700">
    <property type="term" value="F:DNA-binding transcription factor activity"/>
    <property type="evidence" value="ECO:0007669"/>
    <property type="project" value="InterPro"/>
</dbReference>
<dbReference type="GO" id="GO:0043565">
    <property type="term" value="F:sequence-specific DNA binding"/>
    <property type="evidence" value="ECO:0000318"/>
    <property type="project" value="GO_Central"/>
</dbReference>
<dbReference type="GO" id="GO:0045892">
    <property type="term" value="P:negative regulation of DNA-templated transcription"/>
    <property type="evidence" value="ECO:0007669"/>
    <property type="project" value="UniProtKB-UniRule"/>
</dbReference>
<dbReference type="GO" id="GO:0006355">
    <property type="term" value="P:regulation of DNA-templated transcription"/>
    <property type="evidence" value="ECO:0000318"/>
    <property type="project" value="GO_Central"/>
</dbReference>
<dbReference type="FunFam" id="1.10.1270.10:FF:000001">
    <property type="entry name" value="Trp operon repressor"/>
    <property type="match status" value="1"/>
</dbReference>
<dbReference type="Gene3D" id="1.10.1270.10">
    <property type="entry name" value="TrpR-like"/>
    <property type="match status" value="1"/>
</dbReference>
<dbReference type="HAMAP" id="MF_00475">
    <property type="entry name" value="Trp_repressor"/>
    <property type="match status" value="1"/>
</dbReference>
<dbReference type="InterPro" id="IPR000831">
    <property type="entry name" value="Trp_repress"/>
</dbReference>
<dbReference type="InterPro" id="IPR013335">
    <property type="entry name" value="Trp_repress_bac"/>
</dbReference>
<dbReference type="InterPro" id="IPR010921">
    <property type="entry name" value="Trp_repressor/repl_initiator"/>
</dbReference>
<dbReference type="InterPro" id="IPR038116">
    <property type="entry name" value="TrpR-like_sf"/>
</dbReference>
<dbReference type="NCBIfam" id="TIGR01321">
    <property type="entry name" value="TrpR"/>
    <property type="match status" value="1"/>
</dbReference>
<dbReference type="PANTHER" id="PTHR38025">
    <property type="entry name" value="TRP OPERON REPRESSOR"/>
    <property type="match status" value="1"/>
</dbReference>
<dbReference type="PANTHER" id="PTHR38025:SF1">
    <property type="entry name" value="TRP OPERON REPRESSOR"/>
    <property type="match status" value="1"/>
</dbReference>
<dbReference type="Pfam" id="PF01371">
    <property type="entry name" value="Trp_repressor"/>
    <property type="match status" value="1"/>
</dbReference>
<dbReference type="PIRSF" id="PIRSF003196">
    <property type="entry name" value="Trp_repressor"/>
    <property type="match status" value="1"/>
</dbReference>
<dbReference type="SUPFAM" id="SSF48295">
    <property type="entry name" value="TrpR-like"/>
    <property type="match status" value="1"/>
</dbReference>